<sequence>MNKVEQKSQESVSFKDVTVGFTQEEWQHLDPSQRALYRDVMLENYSNLVSVGYCVHKPEVIFRLQQGEEPWKQEEEFPSQSFPVWTADHLKERSQENQSKHLWEVVFINNEMLTKEQGDVIGIPFNVDVSSFPSRKMFCQCDSCGMSFNTVSELVISKINYLGKKSDEFNACGKLLLNIKHDETHTQEKNEVLKNRNTLSHHEETLQHEKIQTLEHNFEYSICQETLLEKAVFNTQKRENAEENNCDYNEFGRTLCDSSSLLFHQISPSRDNHYEFSDCEKFLCVKSTLSKPHGVSMKHYDCGESGNNFRRKLCLSHLQKGDKGEKHFECNECGKAFWEKSHLTRHQRVHTGQKPFQCNECEKAFWDKSNLTKHQRSHTGEKPFECNECGKAFSHKSALTLHQRTHTGEKPYQCNACGKTFCQKSDLTKHQRTHTGLKPYECYECGKSFRVTSHLKVHQRTHTGEKPFECLECGKSFSEKSNLTQHQRIHIGDKSYECNACGKTFYHKSLLTRHQIIHTGWKPYECYECGKTFCLKSDLTVHQRTHTGQKPFACPECGKFFSHKSTLSQHYRTHTGEKPYECHECGKIFYNKSYLTKHNRTHTGEKPYECNECGKAFYQKSQLTQHQRIHIGEKPYKCNECGKAFCHKSALIVHQRTHTQEKPYKCNECGKSFCVKSGLIFHERKHTGEKPYECNECGKFFRHKSSLTVHHRAHTGEKSCQCNECGKIFYRKSELAQHQRSHTGEKPYECNTCRKTFSQKSNLIVHQRRHIGENLMNEMDIRNFQPQVSLHNASEYSHCGESPDDILNVQ</sequence>
<reference key="1">
    <citation type="journal article" date="2003" name="Biochem. Biophys. Res. Commun.">
        <title>A novel zinc finger protein, ZZaPK, interacts with ZAK and stimulates the ZAK-expressing cells re-entering the cell cycle.</title>
        <authorList>
            <person name="Yang J.-J."/>
        </authorList>
    </citation>
    <scope>NUCLEOTIDE SEQUENCE [MRNA] (ISOFORM 1)</scope>
    <scope>INTERACTION WITH MAP3K20</scope>
</reference>
<reference key="2">
    <citation type="journal article" date="1994" name="DNA Res.">
        <title>Prediction of the coding sequences of unidentified human genes. II. The coding sequences of 40 new genes (KIAA0041-KIAA0080) deduced by analysis of cDNA clones from human cell line KG-1.</title>
        <authorList>
            <person name="Nomura N."/>
            <person name="Nagase T."/>
            <person name="Miyajima N."/>
            <person name="Sazuka T."/>
            <person name="Tanaka A."/>
            <person name="Sato S."/>
            <person name="Seki N."/>
            <person name="Kawarabayasi Y."/>
            <person name="Ishikawa K."/>
            <person name="Tabata S."/>
        </authorList>
    </citation>
    <scope>NUCLEOTIDE SEQUENCE [LARGE SCALE MRNA] (ISOFORM 1)</scope>
    <source>
        <tissue>Bone marrow</tissue>
    </source>
</reference>
<reference key="3">
    <citation type="journal article" date="2004" name="Nat. Genet.">
        <title>Complete sequencing and characterization of 21,243 full-length human cDNAs.</title>
        <authorList>
            <person name="Ota T."/>
            <person name="Suzuki Y."/>
            <person name="Nishikawa T."/>
            <person name="Otsuki T."/>
            <person name="Sugiyama T."/>
            <person name="Irie R."/>
            <person name="Wakamatsu A."/>
            <person name="Hayashi K."/>
            <person name="Sato H."/>
            <person name="Nagai K."/>
            <person name="Kimura K."/>
            <person name="Makita H."/>
            <person name="Sekine M."/>
            <person name="Obayashi M."/>
            <person name="Nishi T."/>
            <person name="Shibahara T."/>
            <person name="Tanaka T."/>
            <person name="Ishii S."/>
            <person name="Yamamoto J."/>
            <person name="Saito K."/>
            <person name="Kawai Y."/>
            <person name="Isono Y."/>
            <person name="Nakamura Y."/>
            <person name="Nagahari K."/>
            <person name="Murakami K."/>
            <person name="Yasuda T."/>
            <person name="Iwayanagi T."/>
            <person name="Wagatsuma M."/>
            <person name="Shiratori A."/>
            <person name="Sudo H."/>
            <person name="Hosoiri T."/>
            <person name="Kaku Y."/>
            <person name="Kodaira H."/>
            <person name="Kondo H."/>
            <person name="Sugawara M."/>
            <person name="Takahashi M."/>
            <person name="Kanda K."/>
            <person name="Yokoi T."/>
            <person name="Furuya T."/>
            <person name="Kikkawa E."/>
            <person name="Omura Y."/>
            <person name="Abe K."/>
            <person name="Kamihara K."/>
            <person name="Katsuta N."/>
            <person name="Sato K."/>
            <person name="Tanikawa M."/>
            <person name="Yamazaki M."/>
            <person name="Ninomiya K."/>
            <person name="Ishibashi T."/>
            <person name="Yamashita H."/>
            <person name="Murakawa K."/>
            <person name="Fujimori K."/>
            <person name="Tanai H."/>
            <person name="Kimata M."/>
            <person name="Watanabe M."/>
            <person name="Hiraoka S."/>
            <person name="Chiba Y."/>
            <person name="Ishida S."/>
            <person name="Ono Y."/>
            <person name="Takiguchi S."/>
            <person name="Watanabe S."/>
            <person name="Yosida M."/>
            <person name="Hotuta T."/>
            <person name="Kusano J."/>
            <person name="Kanehori K."/>
            <person name="Takahashi-Fujii A."/>
            <person name="Hara H."/>
            <person name="Tanase T.-O."/>
            <person name="Nomura Y."/>
            <person name="Togiya S."/>
            <person name="Komai F."/>
            <person name="Hara R."/>
            <person name="Takeuchi K."/>
            <person name="Arita M."/>
            <person name="Imose N."/>
            <person name="Musashino K."/>
            <person name="Yuuki H."/>
            <person name="Oshima A."/>
            <person name="Sasaki N."/>
            <person name="Aotsuka S."/>
            <person name="Yoshikawa Y."/>
            <person name="Matsunawa H."/>
            <person name="Ichihara T."/>
            <person name="Shiohata N."/>
            <person name="Sano S."/>
            <person name="Moriya S."/>
            <person name="Momiyama H."/>
            <person name="Satoh N."/>
            <person name="Takami S."/>
            <person name="Terashima Y."/>
            <person name="Suzuki O."/>
            <person name="Nakagawa S."/>
            <person name="Senoh A."/>
            <person name="Mizoguchi H."/>
            <person name="Goto Y."/>
            <person name="Shimizu F."/>
            <person name="Wakebe H."/>
            <person name="Hishigaki H."/>
            <person name="Watanabe T."/>
            <person name="Sugiyama A."/>
            <person name="Takemoto M."/>
            <person name="Kawakami B."/>
            <person name="Yamazaki M."/>
            <person name="Watanabe K."/>
            <person name="Kumagai A."/>
            <person name="Itakura S."/>
            <person name="Fukuzumi Y."/>
            <person name="Fujimori Y."/>
            <person name="Komiyama M."/>
            <person name="Tashiro H."/>
            <person name="Tanigami A."/>
            <person name="Fujiwara T."/>
            <person name="Ono T."/>
            <person name="Yamada K."/>
            <person name="Fujii Y."/>
            <person name="Ozaki K."/>
            <person name="Hirao M."/>
            <person name="Ohmori Y."/>
            <person name="Kawabata A."/>
            <person name="Hikiji T."/>
            <person name="Kobatake N."/>
            <person name="Inagaki H."/>
            <person name="Ikema Y."/>
            <person name="Okamoto S."/>
            <person name="Okitani R."/>
            <person name="Kawakami T."/>
            <person name="Noguchi S."/>
            <person name="Itoh T."/>
            <person name="Shigeta K."/>
            <person name="Senba T."/>
            <person name="Matsumura K."/>
            <person name="Nakajima Y."/>
            <person name="Mizuno T."/>
            <person name="Morinaga M."/>
            <person name="Sasaki M."/>
            <person name="Togashi T."/>
            <person name="Oyama M."/>
            <person name="Hata H."/>
            <person name="Watanabe M."/>
            <person name="Komatsu T."/>
            <person name="Mizushima-Sugano J."/>
            <person name="Satoh T."/>
            <person name="Shirai Y."/>
            <person name="Takahashi Y."/>
            <person name="Nakagawa K."/>
            <person name="Okumura K."/>
            <person name="Nagase T."/>
            <person name="Nomura N."/>
            <person name="Kikuchi H."/>
            <person name="Masuho Y."/>
            <person name="Yamashita R."/>
            <person name="Nakai K."/>
            <person name="Yada T."/>
            <person name="Nakamura Y."/>
            <person name="Ohara O."/>
            <person name="Isogai T."/>
            <person name="Sugano S."/>
        </authorList>
    </citation>
    <scope>NUCLEOTIDE SEQUENCE [LARGE SCALE MRNA] (ISOFORMS 2 AND 3)</scope>
    <scope>VARIANT GLU-549</scope>
    <source>
        <tissue>Trachea</tissue>
    </source>
</reference>
<reference key="4">
    <citation type="journal article" date="2004" name="Nature">
        <title>The DNA sequence and comparative analysis of human chromosome 10.</title>
        <authorList>
            <person name="Deloukas P."/>
            <person name="Earthrowl M.E."/>
            <person name="Grafham D.V."/>
            <person name="Rubenfield M."/>
            <person name="French L."/>
            <person name="Steward C.A."/>
            <person name="Sims S.K."/>
            <person name="Jones M.C."/>
            <person name="Searle S."/>
            <person name="Scott C."/>
            <person name="Howe K."/>
            <person name="Hunt S.E."/>
            <person name="Andrews T.D."/>
            <person name="Gilbert J.G.R."/>
            <person name="Swarbreck D."/>
            <person name="Ashurst J.L."/>
            <person name="Taylor A."/>
            <person name="Battles J."/>
            <person name="Bird C.P."/>
            <person name="Ainscough R."/>
            <person name="Almeida J.P."/>
            <person name="Ashwell R.I.S."/>
            <person name="Ambrose K.D."/>
            <person name="Babbage A.K."/>
            <person name="Bagguley C.L."/>
            <person name="Bailey J."/>
            <person name="Banerjee R."/>
            <person name="Bates K."/>
            <person name="Beasley H."/>
            <person name="Bray-Allen S."/>
            <person name="Brown A.J."/>
            <person name="Brown J.Y."/>
            <person name="Burford D.C."/>
            <person name="Burrill W."/>
            <person name="Burton J."/>
            <person name="Cahill P."/>
            <person name="Camire D."/>
            <person name="Carter N.P."/>
            <person name="Chapman J.C."/>
            <person name="Clark S.Y."/>
            <person name="Clarke G."/>
            <person name="Clee C.M."/>
            <person name="Clegg S."/>
            <person name="Corby N."/>
            <person name="Coulson A."/>
            <person name="Dhami P."/>
            <person name="Dutta I."/>
            <person name="Dunn M."/>
            <person name="Faulkner L."/>
            <person name="Frankish A."/>
            <person name="Frankland J.A."/>
            <person name="Garner P."/>
            <person name="Garnett J."/>
            <person name="Gribble S."/>
            <person name="Griffiths C."/>
            <person name="Grocock R."/>
            <person name="Gustafson E."/>
            <person name="Hammond S."/>
            <person name="Harley J.L."/>
            <person name="Hart E."/>
            <person name="Heath P.D."/>
            <person name="Ho T.P."/>
            <person name="Hopkins B."/>
            <person name="Horne J."/>
            <person name="Howden P.J."/>
            <person name="Huckle E."/>
            <person name="Hynds C."/>
            <person name="Johnson C."/>
            <person name="Johnson D."/>
            <person name="Kana A."/>
            <person name="Kay M."/>
            <person name="Kimberley A.M."/>
            <person name="Kershaw J.K."/>
            <person name="Kokkinaki M."/>
            <person name="Laird G.K."/>
            <person name="Lawlor S."/>
            <person name="Lee H.M."/>
            <person name="Leongamornlert D.A."/>
            <person name="Laird G."/>
            <person name="Lloyd C."/>
            <person name="Lloyd D.M."/>
            <person name="Loveland J."/>
            <person name="Lovell J."/>
            <person name="McLaren S."/>
            <person name="McLay K.E."/>
            <person name="McMurray A."/>
            <person name="Mashreghi-Mohammadi M."/>
            <person name="Matthews L."/>
            <person name="Milne S."/>
            <person name="Nickerson T."/>
            <person name="Nguyen M."/>
            <person name="Overton-Larty E."/>
            <person name="Palmer S.A."/>
            <person name="Pearce A.V."/>
            <person name="Peck A.I."/>
            <person name="Pelan S."/>
            <person name="Phillimore B."/>
            <person name="Porter K."/>
            <person name="Rice C.M."/>
            <person name="Rogosin A."/>
            <person name="Ross M.T."/>
            <person name="Sarafidou T."/>
            <person name="Sehra H.K."/>
            <person name="Shownkeen R."/>
            <person name="Skuce C.D."/>
            <person name="Smith M."/>
            <person name="Standring L."/>
            <person name="Sycamore N."/>
            <person name="Tester J."/>
            <person name="Thorpe A."/>
            <person name="Torcasso W."/>
            <person name="Tracey A."/>
            <person name="Tromans A."/>
            <person name="Tsolas J."/>
            <person name="Wall M."/>
            <person name="Walsh J."/>
            <person name="Wang H."/>
            <person name="Weinstock K."/>
            <person name="West A.P."/>
            <person name="Willey D.L."/>
            <person name="Whitehead S.L."/>
            <person name="Wilming L."/>
            <person name="Wray P.W."/>
            <person name="Young L."/>
            <person name="Chen Y."/>
            <person name="Lovering R.C."/>
            <person name="Moschonas N.K."/>
            <person name="Siebert R."/>
            <person name="Fechtel K."/>
            <person name="Bentley D."/>
            <person name="Durbin R.M."/>
            <person name="Hubbard T."/>
            <person name="Doucette-Stamm L."/>
            <person name="Beck S."/>
            <person name="Smith D.R."/>
            <person name="Rogers J."/>
        </authorList>
    </citation>
    <scope>NUCLEOTIDE SEQUENCE [LARGE SCALE GENOMIC DNA]</scope>
</reference>
<reference key="5">
    <citation type="journal article" date="1993" name="Nucleic Acids Res.">
        <title>Duplicated KOX zinc finger gene clusters flank the centromere of human chromosome 10: evidence for a pericentric inversion during primate evolution.</title>
        <authorList>
            <person name="Tunnacliffe A."/>
            <person name="Liu L."/>
            <person name="Moore J.K."/>
            <person name="Leversha M.A."/>
            <person name="Jackson M.S."/>
            <person name="Ferguson-Smith M.A."/>
            <person name="Thiesen H.-J."/>
            <person name="Ponder B.A."/>
        </authorList>
    </citation>
    <scope>NUCLEOTIDE SEQUENCE [GENOMIC DNA / MRNA] OF 139-361 AND 629-810 (ISOFORM 1)</scope>
</reference>
<reference key="6">
    <citation type="journal article" date="2014" name="Nat. Struct. Mol. Biol.">
        <title>Uncovering global SUMOylation signaling networks in a site-specific manner.</title>
        <authorList>
            <person name="Hendriks I.A."/>
            <person name="D'Souza R.C."/>
            <person name="Yang B."/>
            <person name="Verlaan-de Vries M."/>
            <person name="Mann M."/>
            <person name="Vertegaal A.C."/>
        </authorList>
    </citation>
    <scope>SUMOYLATION [LARGE SCALE ANALYSIS] AT LYS-180</scope>
    <scope>IDENTIFICATION BY MASS SPECTROMETRY [LARGE SCALE ANALYSIS]</scope>
</reference>
<reference key="7">
    <citation type="journal article" date="2015" name="Mol. Cell. Proteomics">
        <title>System-wide analysis of SUMOylation dynamics in response to replication stress reveals novel small ubiquitin-like modified target proteins and acceptor lysines relevant for genome stability.</title>
        <authorList>
            <person name="Xiao Z."/>
            <person name="Chang J.G."/>
            <person name="Hendriks I.A."/>
            <person name="Sigurdsson J.O."/>
            <person name="Olsen J.V."/>
            <person name="Vertegaal A.C."/>
        </authorList>
    </citation>
    <scope>SUMOYLATION [LARGE SCALE ANALYSIS] AT LYS-180</scope>
    <scope>IDENTIFICATION BY MASS SPECTROMETRY [LARGE SCALE ANALYSIS]</scope>
</reference>
<reference key="8">
    <citation type="journal article" date="2017" name="Nat. Struct. Mol. Biol.">
        <title>Site-specific mapping of the human SUMO proteome reveals co-modification with phosphorylation.</title>
        <authorList>
            <person name="Hendriks I.A."/>
            <person name="Lyon D."/>
            <person name="Young C."/>
            <person name="Jensen L.J."/>
            <person name="Vertegaal A.C."/>
            <person name="Nielsen M.L."/>
        </authorList>
    </citation>
    <scope>SUMOYLATION [LARGE SCALE ANALYSIS] AT LYS-180; LYS-237; LYS-312; LYS-456; LYS-676 AND LYS-732</scope>
    <scope>SUMOYLATION [LARGE SCALE ANALYSIS] AT LYS-72 AND LYS-92 (ISOFORM 2)</scope>
    <scope>IDENTIFICATION BY MASS SPECTROMETRY [LARGE SCALE ANALYSIS]</scope>
</reference>
<proteinExistence type="evidence at protein level"/>
<feature type="chain" id="PRO_0000047363" description="Zinc finger protein 33A">
    <location>
        <begin position="1"/>
        <end position="810"/>
    </location>
</feature>
<feature type="domain" description="KRAB" evidence="2">
    <location>
        <begin position="12"/>
        <end position="83"/>
    </location>
</feature>
<feature type="zinc finger region" description="C2H2-type 1" evidence="1">
    <location>
        <begin position="328"/>
        <end position="350"/>
    </location>
</feature>
<feature type="zinc finger region" description="C2H2-type 2" evidence="1">
    <location>
        <begin position="356"/>
        <end position="378"/>
    </location>
</feature>
<feature type="zinc finger region" description="C2H2-type 3" evidence="1">
    <location>
        <begin position="384"/>
        <end position="406"/>
    </location>
</feature>
<feature type="zinc finger region" description="C2H2-type 4" evidence="1">
    <location>
        <begin position="412"/>
        <end position="434"/>
    </location>
</feature>
<feature type="zinc finger region" description="C2H2-type 5" evidence="1">
    <location>
        <begin position="440"/>
        <end position="462"/>
    </location>
</feature>
<feature type="zinc finger region" description="C2H2-type 6" evidence="1">
    <location>
        <begin position="468"/>
        <end position="490"/>
    </location>
</feature>
<feature type="zinc finger region" description="C2H2-type 7" evidence="1">
    <location>
        <begin position="496"/>
        <end position="518"/>
    </location>
</feature>
<feature type="zinc finger region" description="C2H2-type 8" evidence="1">
    <location>
        <begin position="524"/>
        <end position="546"/>
    </location>
</feature>
<feature type="zinc finger region" description="C2H2-type 9" evidence="1">
    <location>
        <begin position="552"/>
        <end position="574"/>
    </location>
</feature>
<feature type="zinc finger region" description="C2H2-type 10" evidence="1">
    <location>
        <begin position="580"/>
        <end position="602"/>
    </location>
</feature>
<feature type="zinc finger region" description="C2H2-type 11" evidence="1">
    <location>
        <begin position="608"/>
        <end position="630"/>
    </location>
</feature>
<feature type="zinc finger region" description="C2H2-type 12" evidence="1">
    <location>
        <begin position="636"/>
        <end position="658"/>
    </location>
</feature>
<feature type="zinc finger region" description="C2H2-type 13" evidence="1">
    <location>
        <begin position="664"/>
        <end position="686"/>
    </location>
</feature>
<feature type="zinc finger region" description="C2H2-type 14" evidence="1">
    <location>
        <begin position="692"/>
        <end position="714"/>
    </location>
</feature>
<feature type="zinc finger region" description="C2H2-type 15" evidence="1">
    <location>
        <begin position="720"/>
        <end position="742"/>
    </location>
</feature>
<feature type="zinc finger region" description="C2H2-type 16" evidence="1">
    <location>
        <begin position="748"/>
        <end position="770"/>
    </location>
</feature>
<feature type="cross-link" description="Glycyl lysine isopeptide (Lys-Gly) (interchain with G-Cter in SUMO2)" evidence="7 8 9">
    <location>
        <position position="180"/>
    </location>
</feature>
<feature type="cross-link" description="Glycyl lysine isopeptide (Lys-Gly) (interchain with G-Cter in SUMO2)" evidence="9">
    <location>
        <position position="237"/>
    </location>
</feature>
<feature type="cross-link" description="Glycyl lysine isopeptide (Lys-Gly) (interchain with G-Cter in SUMO2)" evidence="9">
    <location>
        <position position="312"/>
    </location>
</feature>
<feature type="cross-link" description="Glycyl lysine isopeptide (Lys-Gly) (interchain with G-Cter in SUMO2)" evidence="9">
    <location>
        <position position="456"/>
    </location>
</feature>
<feature type="cross-link" description="Glycyl lysine isopeptide (Lys-Gly) (interchain with G-Cter in SUMO2)" evidence="9">
    <location>
        <position position="676"/>
    </location>
</feature>
<feature type="cross-link" description="Glycyl lysine isopeptide (Lys-Gly) (interchain with G-Cter in SUMO2)" evidence="9">
    <location>
        <position position="732"/>
    </location>
</feature>
<feature type="splice variant" id="VSP_055165" description="In isoform 3." evidence="5">
    <original>MNK</original>
    <variation>MANATRRGSG</variation>
    <location>
        <begin position="1"/>
        <end position="3"/>
    </location>
</feature>
<feature type="splice variant" id="VSP_046420" description="In isoform 2." evidence="5">
    <original>P</original>
    <variation>PE</variation>
    <location>
        <position position="83"/>
    </location>
</feature>
<feature type="sequence variant" id="VAR_052749" description="In dbSNP:rs2505232." evidence="4">
    <original>Q</original>
    <variation>E</variation>
    <location>
        <position position="549"/>
    </location>
</feature>
<feature type="sequence variant" id="VAR_052750" description="In dbSNP:rs12256916.">
    <original>G</original>
    <variation>R</variation>
    <location>
        <position position="614"/>
    </location>
</feature>
<feature type="sequence variant" id="VAR_052751" description="In dbSNP:rs10508862.">
    <original>D</original>
    <variation>H</variation>
    <location>
        <position position="804"/>
    </location>
</feature>
<feature type="sequence conflict" description="In Ref. 3; BAG64490." evidence="6" ref="3">
    <original>V</original>
    <variation>A</variation>
    <location>
        <position position="129"/>
    </location>
</feature>
<feature type="sequence conflict" description="In Ref. 3; BAG64490." evidence="6" ref="3">
    <original>C</original>
    <variation>R</variation>
    <location>
        <position position="389"/>
    </location>
</feature>
<feature type="sequence conflict" description="In Ref. 3; BAF85533." evidence="6" ref="3">
    <original>Q</original>
    <variation>H</variation>
    <location>
        <position position="721"/>
    </location>
</feature>
<feature type="sequence conflict" description="In Ref. 3; BAF85533." evidence="6" ref="3">
    <original>E</original>
    <variation>K</variation>
    <location>
        <position position="745"/>
    </location>
</feature>
<feature type="cross-link" description="Glycyl lysine isopeptide (Lys-Gly) (interchain with G-Cter in SUMO2)" evidence="9">
    <location sequence="Q06730-2">
        <position position="72"/>
    </location>
</feature>
<feature type="cross-link" description="Glycyl lysine isopeptide (Lys-Gly) (interchain with G-Cter in SUMO2)" evidence="9">
    <location sequence="Q06730-2">
        <position position="92"/>
    </location>
</feature>
<accession>Q06730</accession>
<accession>A8K9X9</accession>
<accession>B4E0M8</accession>
<accession>F6TH33</accession>
<accession>F8WAJ5</accession>
<accession>P17013</accession>
<accession>Q5VZ86</accession>
<comment type="function">
    <text>May be involved in transcriptional regulation.</text>
</comment>
<comment type="subunit">
    <text evidence="3">Interacts with MAP3K20/ZAK.</text>
</comment>
<comment type="subcellular location">
    <subcellularLocation>
        <location evidence="6">Nucleus</location>
    </subcellularLocation>
</comment>
<comment type="alternative products">
    <event type="alternative splicing"/>
    <isoform>
        <id>Q06730-1</id>
        <name>1</name>
        <sequence type="displayed"/>
    </isoform>
    <isoform>
        <id>Q06730-2</id>
        <name>2</name>
        <sequence type="described" ref="VSP_046420"/>
    </isoform>
    <isoform>
        <id>Q06730-3</id>
        <name>3</name>
        <sequence type="described" ref="VSP_055165"/>
    </isoform>
</comment>
<comment type="similarity">
    <text evidence="6">Belongs to the krueppel C2H2-type zinc-finger protein family.</text>
</comment>
<keyword id="KW-0025">Alternative splicing</keyword>
<keyword id="KW-0238">DNA-binding</keyword>
<keyword id="KW-1017">Isopeptide bond</keyword>
<keyword id="KW-0479">Metal-binding</keyword>
<keyword id="KW-0539">Nucleus</keyword>
<keyword id="KW-1267">Proteomics identification</keyword>
<keyword id="KW-1185">Reference proteome</keyword>
<keyword id="KW-0677">Repeat</keyword>
<keyword id="KW-0804">Transcription</keyword>
<keyword id="KW-0805">Transcription regulation</keyword>
<keyword id="KW-0832">Ubl conjugation</keyword>
<keyword id="KW-0862">Zinc</keyword>
<keyword id="KW-0863">Zinc-finger</keyword>
<evidence type="ECO:0000255" key="1">
    <source>
        <dbReference type="PROSITE-ProRule" id="PRU00042"/>
    </source>
</evidence>
<evidence type="ECO:0000255" key="2">
    <source>
        <dbReference type="PROSITE-ProRule" id="PRU00119"/>
    </source>
</evidence>
<evidence type="ECO:0000269" key="3">
    <source>
    </source>
</evidence>
<evidence type="ECO:0000269" key="4">
    <source>
    </source>
</evidence>
<evidence type="ECO:0000303" key="5">
    <source>
    </source>
</evidence>
<evidence type="ECO:0000305" key="6"/>
<evidence type="ECO:0007744" key="7">
    <source>
    </source>
</evidence>
<evidence type="ECO:0007744" key="8">
    <source>
    </source>
</evidence>
<evidence type="ECO:0007744" key="9">
    <source>
    </source>
</evidence>
<name>ZN33A_HUMAN</name>
<organism>
    <name type="scientific">Homo sapiens</name>
    <name type="common">Human</name>
    <dbReference type="NCBI Taxonomy" id="9606"/>
    <lineage>
        <taxon>Eukaryota</taxon>
        <taxon>Metazoa</taxon>
        <taxon>Chordata</taxon>
        <taxon>Craniata</taxon>
        <taxon>Vertebrata</taxon>
        <taxon>Euteleostomi</taxon>
        <taxon>Mammalia</taxon>
        <taxon>Eutheria</taxon>
        <taxon>Euarchontoglires</taxon>
        <taxon>Primates</taxon>
        <taxon>Haplorrhini</taxon>
        <taxon>Catarrhini</taxon>
        <taxon>Hominidae</taxon>
        <taxon>Homo</taxon>
    </lineage>
</organism>
<gene>
    <name type="primary">ZNF33A</name>
    <name type="synonym">KIAA0065</name>
    <name type="synonym">KOX31</name>
    <name type="synonym">ZNF11</name>
    <name type="synonym">ZNF11A</name>
    <name type="synonym">ZNF33</name>
</gene>
<dbReference type="EMBL" id="AY184389">
    <property type="protein sequence ID" value="AAO24702.1"/>
    <property type="molecule type" value="mRNA"/>
</dbReference>
<dbReference type="EMBL" id="D31763">
    <property type="protein sequence ID" value="BAA06541.1"/>
    <property type="molecule type" value="mRNA"/>
</dbReference>
<dbReference type="EMBL" id="AK292844">
    <property type="protein sequence ID" value="BAF85533.1"/>
    <property type="molecule type" value="mRNA"/>
</dbReference>
<dbReference type="EMBL" id="AK303445">
    <property type="protein sequence ID" value="BAG64490.1"/>
    <property type="molecule type" value="mRNA"/>
</dbReference>
<dbReference type="EMBL" id="AL161931">
    <property type="status" value="NOT_ANNOTATED_CDS"/>
    <property type="molecule type" value="Genomic_DNA"/>
</dbReference>
<dbReference type="EMBL" id="AL117337">
    <property type="status" value="NOT_ANNOTATED_CDS"/>
    <property type="molecule type" value="Genomic_DNA"/>
</dbReference>
<dbReference type="EMBL" id="X68686">
    <property type="protein sequence ID" value="CAA48645.1"/>
    <property type="molecule type" value="Genomic_DNA"/>
</dbReference>
<dbReference type="EMBL" id="X68687">
    <property type="protein sequence ID" value="CAA48646.1"/>
    <property type="molecule type" value="mRNA"/>
</dbReference>
<dbReference type="EMBL" id="X68689">
    <property type="protein sequence ID" value="CAA48648.1"/>
    <property type="molecule type" value="Genomic_DNA"/>
</dbReference>
<dbReference type="CCDS" id="CCDS31182.1">
    <molecule id="Q06730-1"/>
</dbReference>
<dbReference type="CCDS" id="CCDS44372.1">
    <molecule id="Q06730-2"/>
</dbReference>
<dbReference type="CCDS" id="CCDS60514.1">
    <molecule id="Q06730-3"/>
</dbReference>
<dbReference type="PIR" id="S33991">
    <property type="entry name" value="S33991"/>
</dbReference>
<dbReference type="PIR" id="S33992">
    <property type="entry name" value="S33990"/>
</dbReference>
<dbReference type="RefSeq" id="NP_001265099.1">
    <molecule id="Q06730-3"/>
    <property type="nucleotide sequence ID" value="NM_001278170.2"/>
</dbReference>
<dbReference type="RefSeq" id="NP_001265100.1">
    <property type="nucleotide sequence ID" value="NM_001278171.1"/>
</dbReference>
<dbReference type="RefSeq" id="NP_001265102.1">
    <property type="nucleotide sequence ID" value="NM_001278173.1"/>
</dbReference>
<dbReference type="RefSeq" id="NP_001265103.1">
    <property type="nucleotide sequence ID" value="NM_001278174.1"/>
</dbReference>
<dbReference type="RefSeq" id="NP_001265104.1">
    <property type="nucleotide sequence ID" value="NM_001278175.1"/>
</dbReference>
<dbReference type="RefSeq" id="NP_001265105.1">
    <property type="nucleotide sequence ID" value="NM_001278176.1"/>
</dbReference>
<dbReference type="RefSeq" id="NP_001265106.1">
    <property type="nucleotide sequence ID" value="NM_001278177.1"/>
</dbReference>
<dbReference type="RefSeq" id="NP_001265107.1">
    <property type="nucleotide sequence ID" value="NM_001278178.1"/>
</dbReference>
<dbReference type="RefSeq" id="NP_001265108.1">
    <property type="nucleotide sequence ID" value="NM_001278179.1"/>
</dbReference>
<dbReference type="RefSeq" id="NP_008885.1">
    <molecule id="Q06730-2"/>
    <property type="nucleotide sequence ID" value="NM_006954.2"/>
</dbReference>
<dbReference type="RefSeq" id="NP_008905.1">
    <molecule id="Q06730-1"/>
    <property type="nucleotide sequence ID" value="NM_006974.3"/>
</dbReference>
<dbReference type="RefSeq" id="XP_011517952.1">
    <molecule id="Q06730-2"/>
    <property type="nucleotide sequence ID" value="XM_011519650.3"/>
</dbReference>
<dbReference type="RefSeq" id="XP_011517953.1">
    <molecule id="Q06730-1"/>
    <property type="nucleotide sequence ID" value="XM_011519651.3"/>
</dbReference>
<dbReference type="SMR" id="Q06730"/>
<dbReference type="BioGRID" id="113410">
    <property type="interactions" value="10"/>
</dbReference>
<dbReference type="FunCoup" id="Q06730">
    <property type="interactions" value="227"/>
</dbReference>
<dbReference type="IntAct" id="Q06730">
    <property type="interactions" value="7"/>
</dbReference>
<dbReference type="STRING" id="9606.ENSP00000304268"/>
<dbReference type="GlyGen" id="Q06730">
    <property type="glycosylation" value="1 site, 1 O-linked glycan (1 site)"/>
</dbReference>
<dbReference type="iPTMnet" id="Q06730"/>
<dbReference type="PhosphoSitePlus" id="Q06730"/>
<dbReference type="BioMuta" id="ZNF33A"/>
<dbReference type="DMDM" id="11140929"/>
<dbReference type="jPOST" id="Q06730"/>
<dbReference type="MassIVE" id="Q06730"/>
<dbReference type="PaxDb" id="9606-ENSP00000304268"/>
<dbReference type="PeptideAtlas" id="Q06730"/>
<dbReference type="ProteomicsDB" id="27974"/>
<dbReference type="ProteomicsDB" id="30512"/>
<dbReference type="ProteomicsDB" id="58475">
    <molecule id="Q06730-1"/>
</dbReference>
<dbReference type="Pumba" id="Q06730"/>
<dbReference type="Antibodypedia" id="26733">
    <property type="antibodies" value="82 antibodies from 16 providers"/>
</dbReference>
<dbReference type="DNASU" id="7581"/>
<dbReference type="Ensembl" id="ENST00000432900.7">
    <molecule id="Q06730-2"/>
    <property type="protein sequence ID" value="ENSP00000402467.3"/>
    <property type="gene ID" value="ENSG00000189180.16"/>
</dbReference>
<dbReference type="Ensembl" id="ENST00000458705.6">
    <molecule id="Q06730-1"/>
    <property type="protein sequence ID" value="ENSP00000387713.2"/>
    <property type="gene ID" value="ENSG00000189180.16"/>
</dbReference>
<dbReference type="Ensembl" id="ENST00000628825.2">
    <molecule id="Q06730-3"/>
    <property type="protein sequence ID" value="ENSP00000485869.1"/>
    <property type="gene ID" value="ENSG00000189180.16"/>
</dbReference>
<dbReference type="GeneID" id="7581"/>
<dbReference type="KEGG" id="hsa:7581"/>
<dbReference type="MANE-Select" id="ENST00000432900.7">
    <molecule id="Q06730-2"/>
    <property type="protein sequence ID" value="ENSP00000402467.3"/>
    <property type="RefSeq nucleotide sequence ID" value="NM_006954.2"/>
    <property type="RefSeq protein sequence ID" value="NP_008885.1"/>
</dbReference>
<dbReference type="UCSC" id="uc001izg.4">
    <molecule id="Q06730-1"/>
    <property type="organism name" value="human"/>
</dbReference>
<dbReference type="AGR" id="HGNC:13096"/>
<dbReference type="CTD" id="7581"/>
<dbReference type="GeneCards" id="ZNF33A"/>
<dbReference type="HGNC" id="HGNC:13096">
    <property type="gene designation" value="ZNF33A"/>
</dbReference>
<dbReference type="HPA" id="ENSG00000189180">
    <property type="expression patterns" value="Low tissue specificity"/>
</dbReference>
<dbReference type="MIM" id="194521">
    <property type="type" value="gene"/>
</dbReference>
<dbReference type="neXtProt" id="NX_Q06730"/>
<dbReference type="OpenTargets" id="ENSG00000189180"/>
<dbReference type="PharmGKB" id="PA37671"/>
<dbReference type="VEuPathDB" id="HostDB:ENSG00000189180"/>
<dbReference type="eggNOG" id="KOG1721">
    <property type="taxonomic scope" value="Eukaryota"/>
</dbReference>
<dbReference type="GeneTree" id="ENSGT00940000162173"/>
<dbReference type="HOGENOM" id="CLU_002678_0_12_1"/>
<dbReference type="InParanoid" id="Q06730"/>
<dbReference type="OMA" id="CMNSHLI"/>
<dbReference type="OrthoDB" id="9411774at2759"/>
<dbReference type="PAN-GO" id="Q06730">
    <property type="GO annotations" value="4 GO annotations based on evolutionary models"/>
</dbReference>
<dbReference type="PhylomeDB" id="Q06730"/>
<dbReference type="TreeFam" id="TF337898"/>
<dbReference type="PathwayCommons" id="Q06730"/>
<dbReference type="Reactome" id="R-HSA-212436">
    <property type="pathway name" value="Generic Transcription Pathway"/>
</dbReference>
<dbReference type="Reactome" id="R-HSA-9843940">
    <property type="pathway name" value="Regulation of endogenous retroelements by KRAB-ZFP proteins"/>
</dbReference>
<dbReference type="SignaLink" id="Q06730"/>
<dbReference type="BioGRID-ORCS" id="7581">
    <property type="hits" value="6 hits in 1167 CRISPR screens"/>
</dbReference>
<dbReference type="ChiTaRS" id="ZNF33A">
    <property type="organism name" value="human"/>
</dbReference>
<dbReference type="GeneWiki" id="ZNF33A"/>
<dbReference type="GenomeRNAi" id="7581"/>
<dbReference type="Pharos" id="Q06730">
    <property type="development level" value="Tbio"/>
</dbReference>
<dbReference type="PRO" id="PR:Q06730"/>
<dbReference type="Proteomes" id="UP000005640">
    <property type="component" value="Chromosome 10"/>
</dbReference>
<dbReference type="RNAct" id="Q06730">
    <property type="molecule type" value="protein"/>
</dbReference>
<dbReference type="Bgee" id="ENSG00000189180">
    <property type="expression patterns" value="Expressed in cerebellar vermis and 194 other cell types or tissues"/>
</dbReference>
<dbReference type="ExpressionAtlas" id="Q06730">
    <property type="expression patterns" value="baseline and differential"/>
</dbReference>
<dbReference type="GO" id="GO:0005634">
    <property type="term" value="C:nucleus"/>
    <property type="evidence" value="ECO:0000318"/>
    <property type="project" value="GO_Central"/>
</dbReference>
<dbReference type="GO" id="GO:0003677">
    <property type="term" value="F:DNA binding"/>
    <property type="evidence" value="ECO:0007669"/>
    <property type="project" value="UniProtKB-KW"/>
</dbReference>
<dbReference type="GO" id="GO:0003700">
    <property type="term" value="F:DNA-binding transcription factor activity"/>
    <property type="evidence" value="ECO:0000303"/>
    <property type="project" value="UniProtKB"/>
</dbReference>
<dbReference type="GO" id="GO:0008270">
    <property type="term" value="F:zinc ion binding"/>
    <property type="evidence" value="ECO:0007669"/>
    <property type="project" value="UniProtKB-KW"/>
</dbReference>
<dbReference type="GO" id="GO:0006355">
    <property type="term" value="P:regulation of DNA-templated transcription"/>
    <property type="evidence" value="ECO:0000303"/>
    <property type="project" value="UniProtKB"/>
</dbReference>
<dbReference type="GO" id="GO:0006357">
    <property type="term" value="P:regulation of transcription by RNA polymerase II"/>
    <property type="evidence" value="ECO:0000318"/>
    <property type="project" value="GO_Central"/>
</dbReference>
<dbReference type="CDD" id="cd07765">
    <property type="entry name" value="KRAB_A-box"/>
    <property type="match status" value="1"/>
</dbReference>
<dbReference type="FunFam" id="3.30.160.60:FF:000555">
    <property type="entry name" value="Zinc finger protein 1 homolog"/>
    <property type="match status" value="1"/>
</dbReference>
<dbReference type="FunFam" id="3.30.160.60:FF:000139">
    <property type="entry name" value="zinc finger protein 1 homolog"/>
    <property type="match status" value="1"/>
</dbReference>
<dbReference type="FunFam" id="3.30.160.60:FF:000782">
    <property type="entry name" value="Zinc finger protein 33A"/>
    <property type="match status" value="1"/>
</dbReference>
<dbReference type="FunFam" id="3.30.160.60:FF:001844">
    <property type="entry name" value="Zinc finger protein 33A"/>
    <property type="match status" value="1"/>
</dbReference>
<dbReference type="FunFam" id="3.30.160.60:FF:002343">
    <property type="entry name" value="Zinc finger protein 33A"/>
    <property type="match status" value="2"/>
</dbReference>
<dbReference type="FunFam" id="3.30.160.60:FF:000667">
    <property type="entry name" value="Zinc finger protein 33B"/>
    <property type="match status" value="1"/>
</dbReference>
<dbReference type="FunFam" id="3.30.160.60:FF:000699">
    <property type="entry name" value="Zinc finger protein 33B"/>
    <property type="match status" value="1"/>
</dbReference>
<dbReference type="FunFam" id="3.30.160.60:FF:001503">
    <property type="entry name" value="zinc finger protein 33B isoform X2"/>
    <property type="match status" value="1"/>
</dbReference>
<dbReference type="FunFam" id="3.30.160.60:FF:000016">
    <property type="entry name" value="zinc finger protein 37 homolog"/>
    <property type="match status" value="1"/>
</dbReference>
<dbReference type="FunFam" id="3.30.160.60:FF:000060">
    <property type="entry name" value="zinc finger protein 436"/>
    <property type="match status" value="1"/>
</dbReference>
<dbReference type="FunFam" id="3.30.160.60:FF:002254">
    <property type="entry name" value="Zinc finger protein 540"/>
    <property type="match status" value="2"/>
</dbReference>
<dbReference type="FunFam" id="3.30.160.60:FF:000149">
    <property type="entry name" value="Zinc finger protein 569"/>
    <property type="match status" value="1"/>
</dbReference>
<dbReference type="FunFam" id="3.30.160.60:FF:000069">
    <property type="entry name" value="Zinc finger protein 572"/>
    <property type="match status" value="2"/>
</dbReference>
<dbReference type="Gene3D" id="6.10.140.140">
    <property type="match status" value="1"/>
</dbReference>
<dbReference type="Gene3D" id="3.30.160.60">
    <property type="entry name" value="Classic Zinc Finger"/>
    <property type="match status" value="16"/>
</dbReference>
<dbReference type="InterPro" id="IPR001909">
    <property type="entry name" value="KRAB"/>
</dbReference>
<dbReference type="InterPro" id="IPR036051">
    <property type="entry name" value="KRAB_dom_sf"/>
</dbReference>
<dbReference type="InterPro" id="IPR050758">
    <property type="entry name" value="Znf_C2H2-type"/>
</dbReference>
<dbReference type="InterPro" id="IPR036236">
    <property type="entry name" value="Znf_C2H2_sf"/>
</dbReference>
<dbReference type="InterPro" id="IPR013087">
    <property type="entry name" value="Znf_C2H2_type"/>
</dbReference>
<dbReference type="PANTHER" id="PTHR23234:SF8">
    <property type="entry name" value="C2H2-TYPE DOMAIN-CONTAINING PROTEIN"/>
    <property type="match status" value="1"/>
</dbReference>
<dbReference type="PANTHER" id="PTHR23234">
    <property type="entry name" value="ZNF44 PROTEIN"/>
    <property type="match status" value="1"/>
</dbReference>
<dbReference type="Pfam" id="PF01352">
    <property type="entry name" value="KRAB"/>
    <property type="match status" value="1"/>
</dbReference>
<dbReference type="Pfam" id="PF00096">
    <property type="entry name" value="zf-C2H2"/>
    <property type="match status" value="16"/>
</dbReference>
<dbReference type="SMART" id="SM00349">
    <property type="entry name" value="KRAB"/>
    <property type="match status" value="1"/>
</dbReference>
<dbReference type="SMART" id="SM00355">
    <property type="entry name" value="ZnF_C2H2"/>
    <property type="match status" value="16"/>
</dbReference>
<dbReference type="SUPFAM" id="SSF57667">
    <property type="entry name" value="beta-beta-alpha zinc fingers"/>
    <property type="match status" value="9"/>
</dbReference>
<dbReference type="SUPFAM" id="SSF109640">
    <property type="entry name" value="KRAB domain (Kruppel-associated box)"/>
    <property type="match status" value="1"/>
</dbReference>
<dbReference type="PROSITE" id="PS50805">
    <property type="entry name" value="KRAB"/>
    <property type="match status" value="1"/>
</dbReference>
<dbReference type="PROSITE" id="PS00028">
    <property type="entry name" value="ZINC_FINGER_C2H2_1"/>
    <property type="match status" value="16"/>
</dbReference>
<dbReference type="PROSITE" id="PS50157">
    <property type="entry name" value="ZINC_FINGER_C2H2_2"/>
    <property type="match status" value="16"/>
</dbReference>
<protein>
    <recommendedName>
        <fullName>Zinc finger protein 33A</fullName>
    </recommendedName>
    <alternativeName>
        <fullName>Zinc finger and ZAK-associated protein with KRAB domain</fullName>
        <shortName>ZZaPK</shortName>
    </alternativeName>
    <alternativeName>
        <fullName>Zinc finger protein 11A</fullName>
    </alternativeName>
    <alternativeName>
        <fullName>Zinc finger protein KOX31</fullName>
    </alternativeName>
</protein>